<evidence type="ECO:0000250" key="1"/>
<evidence type="ECO:0000250" key="2">
    <source>
        <dbReference type="UniProtKB" id="O42191"/>
    </source>
</evidence>
<evidence type="ECO:0000250" key="3">
    <source>
        <dbReference type="UniProtKB" id="P06859"/>
    </source>
</evidence>
<evidence type="ECO:0000269" key="4">
    <source>
    </source>
</evidence>
<evidence type="ECO:0000303" key="5">
    <source>
    </source>
</evidence>
<evidence type="ECO:0000305" key="6"/>
<evidence type="ECO:0000305" key="7">
    <source>
    </source>
</evidence>
<keyword id="KW-0106">Calcium</keyword>
<keyword id="KW-0903">Direct protein sequencing</keyword>
<keyword id="KW-1015">Disulfide bond</keyword>
<keyword id="KW-1199">Hemostasis impairing toxin</keyword>
<keyword id="KW-0378">Hydrolase</keyword>
<keyword id="KW-0442">Lipid degradation</keyword>
<keyword id="KW-0443">Lipid metabolism</keyword>
<keyword id="KW-0479">Metal-binding</keyword>
<keyword id="KW-1201">Platelet aggregation inhibiting toxin</keyword>
<keyword id="KW-0964">Secreted</keyword>
<keyword id="KW-0800">Toxin</keyword>
<protein>
    <recommendedName>
        <fullName evidence="5">Acidic phospholipase A2 braziliase-I</fullName>
        <shortName>svPLA2</shortName>
        <ecNumber evidence="4">3.1.1.4</ecNumber>
    </recommendedName>
    <alternativeName>
        <fullName>Phosphatidylcholine 2-acylhydrolase</fullName>
    </alternativeName>
</protein>
<accession>P0DUN3</accession>
<sequence>NLWQFEMLIMKIALTSGFMFYSSYGCYCGWGGHGRPKDASDRCCFVHDCCYGKVTTCNPKFGVVVCGGDDPCKKQICECDRVAATCFRDNKYWFYGAKXCQEESDPC</sequence>
<dbReference type="EC" id="3.1.1.4" evidence="4"/>
<dbReference type="GO" id="GO:0005576">
    <property type="term" value="C:extracellular region"/>
    <property type="evidence" value="ECO:0007669"/>
    <property type="project" value="UniProtKB-SubCell"/>
</dbReference>
<dbReference type="GO" id="GO:0005509">
    <property type="term" value="F:calcium ion binding"/>
    <property type="evidence" value="ECO:0007669"/>
    <property type="project" value="InterPro"/>
</dbReference>
<dbReference type="GO" id="GO:0047498">
    <property type="term" value="F:calcium-dependent phospholipase A2 activity"/>
    <property type="evidence" value="ECO:0007669"/>
    <property type="project" value="TreeGrafter"/>
</dbReference>
<dbReference type="GO" id="GO:0005543">
    <property type="term" value="F:phospholipid binding"/>
    <property type="evidence" value="ECO:0007669"/>
    <property type="project" value="TreeGrafter"/>
</dbReference>
<dbReference type="GO" id="GO:0090729">
    <property type="term" value="F:toxin activity"/>
    <property type="evidence" value="ECO:0007669"/>
    <property type="project" value="UniProtKB-KW"/>
</dbReference>
<dbReference type="GO" id="GO:0050482">
    <property type="term" value="P:arachidonate secretion"/>
    <property type="evidence" value="ECO:0007669"/>
    <property type="project" value="InterPro"/>
</dbReference>
<dbReference type="GO" id="GO:0016042">
    <property type="term" value="P:lipid catabolic process"/>
    <property type="evidence" value="ECO:0007669"/>
    <property type="project" value="UniProtKB-KW"/>
</dbReference>
<dbReference type="GO" id="GO:0042130">
    <property type="term" value="P:negative regulation of T cell proliferation"/>
    <property type="evidence" value="ECO:0007669"/>
    <property type="project" value="TreeGrafter"/>
</dbReference>
<dbReference type="GO" id="GO:0006644">
    <property type="term" value="P:phospholipid metabolic process"/>
    <property type="evidence" value="ECO:0007669"/>
    <property type="project" value="InterPro"/>
</dbReference>
<dbReference type="CDD" id="cd00125">
    <property type="entry name" value="PLA2c"/>
    <property type="match status" value="1"/>
</dbReference>
<dbReference type="Gene3D" id="1.20.90.10">
    <property type="entry name" value="Phospholipase A2 domain"/>
    <property type="match status" value="1"/>
</dbReference>
<dbReference type="InterPro" id="IPR001211">
    <property type="entry name" value="PLipase_A2"/>
</dbReference>
<dbReference type="InterPro" id="IPR033112">
    <property type="entry name" value="PLipase_A2_Asp_AS"/>
</dbReference>
<dbReference type="InterPro" id="IPR016090">
    <property type="entry name" value="PLipase_A2_dom"/>
</dbReference>
<dbReference type="InterPro" id="IPR036444">
    <property type="entry name" value="PLipase_A2_dom_sf"/>
</dbReference>
<dbReference type="InterPro" id="IPR033113">
    <property type="entry name" value="PLipase_A2_His_AS"/>
</dbReference>
<dbReference type="PANTHER" id="PTHR11716">
    <property type="entry name" value="PHOSPHOLIPASE A2 FAMILY MEMBER"/>
    <property type="match status" value="1"/>
</dbReference>
<dbReference type="PANTHER" id="PTHR11716:SF9">
    <property type="entry name" value="PHOSPHOLIPASE A2, MEMBRANE ASSOCIATED"/>
    <property type="match status" value="1"/>
</dbReference>
<dbReference type="Pfam" id="PF00068">
    <property type="entry name" value="Phospholip_A2_1"/>
    <property type="match status" value="1"/>
</dbReference>
<dbReference type="PRINTS" id="PR00389">
    <property type="entry name" value="PHPHLIPASEA2"/>
</dbReference>
<dbReference type="SMART" id="SM00085">
    <property type="entry name" value="PA2c"/>
    <property type="match status" value="1"/>
</dbReference>
<dbReference type="SUPFAM" id="SSF48619">
    <property type="entry name" value="Phospholipase A2, PLA2"/>
    <property type="match status" value="1"/>
</dbReference>
<dbReference type="PROSITE" id="PS00119">
    <property type="entry name" value="PA2_ASP"/>
    <property type="match status" value="1"/>
</dbReference>
<dbReference type="PROSITE" id="PS00118">
    <property type="entry name" value="PA2_HIS"/>
    <property type="match status" value="1"/>
</dbReference>
<feature type="chain" id="PRO_0000452894" description="Acidic phospholipase A2 braziliase-I" evidence="4">
    <location>
        <begin position="1"/>
        <end position="107"/>
    </location>
</feature>
<feature type="active site" evidence="3">
    <location>
        <position position="47"/>
    </location>
</feature>
<feature type="active site" evidence="3">
    <location>
        <position position="80"/>
    </location>
</feature>
<feature type="binding site" evidence="2">
    <location>
        <position position="27"/>
    </location>
    <ligand>
        <name>Ca(2+)</name>
        <dbReference type="ChEBI" id="CHEBI:29108"/>
    </ligand>
</feature>
<feature type="binding site" evidence="2">
    <location>
        <position position="29"/>
    </location>
    <ligand>
        <name>Ca(2+)</name>
        <dbReference type="ChEBI" id="CHEBI:29108"/>
    </ligand>
</feature>
<feature type="binding site" evidence="2">
    <location>
        <position position="31"/>
    </location>
    <ligand>
        <name>Ca(2+)</name>
        <dbReference type="ChEBI" id="CHEBI:29108"/>
    </ligand>
</feature>
<feature type="binding site" evidence="2">
    <location>
        <position position="48"/>
    </location>
    <ligand>
        <name>Ca(2+)</name>
        <dbReference type="ChEBI" id="CHEBI:29108"/>
    </ligand>
</feature>
<feature type="disulfide bond" evidence="2">
    <location>
        <begin position="26"/>
        <end position="100"/>
    </location>
</feature>
<feature type="disulfide bond" evidence="2">
    <location>
        <begin position="28"/>
        <end position="44"/>
    </location>
</feature>
<feature type="disulfide bond" evidence="2">
    <location>
        <begin position="43"/>
        <end position="86"/>
    </location>
</feature>
<feature type="disulfide bond" evidence="2">
    <location>
        <begin position="49"/>
        <end position="107"/>
    </location>
</feature>
<feature type="disulfide bond" evidence="2">
    <location>
        <begin position="50"/>
        <end position="79"/>
    </location>
</feature>
<feature type="disulfide bond" evidence="2">
    <location>
        <begin position="57"/>
        <end position="72"/>
    </location>
</feature>
<feature type="disulfide bond" evidence="2">
    <location>
        <begin position="66"/>
        <end position="77"/>
    </location>
</feature>
<feature type="non-consecutive residues" evidence="7">
    <location>
        <begin position="61"/>
        <end position="62"/>
    </location>
</feature>
<feature type="non-consecutive residues" evidence="7">
    <location>
        <begin position="89"/>
        <end position="90"/>
    </location>
</feature>
<comment type="function">
    <text evidence="4">Snake venom phospholipase A2 (PLA2) that induces significant edematogenic activity. Shows mild cytotoxicity on Trypanosoma cruzi and Leishmania infantum. Also inhibits ADP- and collagen-induced platelet aggregation. Does not show myotoxic activity.</text>
</comment>
<comment type="catalytic activity">
    <reaction evidence="4">
        <text>a 1,2-diacyl-sn-glycero-3-phosphocholine + H2O = a 1-acyl-sn-glycero-3-phosphocholine + a fatty acid + H(+)</text>
        <dbReference type="Rhea" id="RHEA:15801"/>
        <dbReference type="ChEBI" id="CHEBI:15377"/>
        <dbReference type="ChEBI" id="CHEBI:15378"/>
        <dbReference type="ChEBI" id="CHEBI:28868"/>
        <dbReference type="ChEBI" id="CHEBI:57643"/>
        <dbReference type="ChEBI" id="CHEBI:58168"/>
        <dbReference type="EC" id="3.1.1.4"/>
    </reaction>
</comment>
<comment type="cofactor">
    <cofactor evidence="4">
        <name>Ca(2+)</name>
        <dbReference type="ChEBI" id="CHEBI:29108"/>
    </cofactor>
    <text evidence="1">Binds 1 Ca(2+) ion.</text>
</comment>
<comment type="biophysicochemical properties">
    <phDependence>
        <text evidence="4">Optimum pH is 5.5-8.5.</text>
    </phDependence>
</comment>
<comment type="subunit">
    <text evidence="4">Monomer.</text>
</comment>
<comment type="subcellular location">
    <subcellularLocation>
        <location evidence="4">Secreted</location>
    </subcellularLocation>
</comment>
<comment type="tissue specificity">
    <text evidence="7">Expressed by the venom gland.</text>
</comment>
<comment type="mass spectrometry"/>
<comment type="similarity">
    <text evidence="6">Belongs to the phospholipase A2 family. Group II subfamily. D49 sub-subfamily.</text>
</comment>
<organism>
    <name type="scientific">Bothrops brazili</name>
    <name type="common">Brazil's lancehead</name>
    <dbReference type="NCBI Taxonomy" id="157546"/>
    <lineage>
        <taxon>Eukaryota</taxon>
        <taxon>Metazoa</taxon>
        <taxon>Chordata</taxon>
        <taxon>Craniata</taxon>
        <taxon>Vertebrata</taxon>
        <taxon>Euteleostomi</taxon>
        <taxon>Lepidosauria</taxon>
        <taxon>Squamata</taxon>
        <taxon>Bifurcata</taxon>
        <taxon>Unidentata</taxon>
        <taxon>Episquamata</taxon>
        <taxon>Toxicofera</taxon>
        <taxon>Serpentes</taxon>
        <taxon>Colubroidea</taxon>
        <taxon>Viperidae</taxon>
        <taxon>Crotalinae</taxon>
        <taxon>Bothrops</taxon>
    </lineage>
</organism>
<name>PA2A1_BOTBZ</name>
<proteinExistence type="evidence at protein level"/>
<reference key="1">
    <citation type="journal article" date="2018" name="Int. J. Biol. Macromol.">
        <title>Anti-platelet aggregation activity of two novel acidic Asp49-phospholipases A2 from Bothrops brazili snake venom.</title>
        <authorList>
            <person name="Sobrinho J.C."/>
            <person name="Kayano A.M."/>
            <person name="Simoes-Silva R."/>
            <person name="Alfonso J.J."/>
            <person name="Gomez A.F."/>
            <person name="Gomez M.C.V."/>
            <person name="Zanchi F.B."/>
            <person name="Moura L.A."/>
            <person name="Souza V.R."/>
            <person name="Fuly A.L."/>
            <person name="de Oliveira E."/>
            <person name="da Silva S.L."/>
            <person name="Almeida J.R."/>
            <person name="Zuliani J.P."/>
            <person name="Soares A.M."/>
        </authorList>
    </citation>
    <scope>PROTEIN SEQUENCE</scope>
    <scope>FUNCTION</scope>
    <scope>CATALYTIC ACTIVITY</scope>
    <scope>COFACTOR</scope>
    <scope>SUBUNIT</scope>
    <scope>SUBCELLULAR LOCATION</scope>
    <scope>MASS SPECTROMETRY</scope>
    <scope>BIOPHYSICOCHEMICAL PROPERTIES</scope>
    <scope>3D-STRUCTURE MODELING</scope>
    <source>
        <tissue>Venom</tissue>
    </source>
</reference>